<keyword id="KW-1015">Disulfide bond</keyword>
<keyword id="KW-0325">Glycoprotein</keyword>
<keyword id="KW-0472">Membrane</keyword>
<keyword id="KW-1185">Reference proteome</keyword>
<keyword id="KW-0732">Signal</keyword>
<keyword id="KW-0812">Transmembrane</keyword>
<keyword id="KW-1133">Transmembrane helix</keyword>
<reference key="1">
    <citation type="journal article" date="2005" name="Nature">
        <title>The genome of the social amoeba Dictyostelium discoideum.</title>
        <authorList>
            <person name="Eichinger L."/>
            <person name="Pachebat J.A."/>
            <person name="Gloeckner G."/>
            <person name="Rajandream M.A."/>
            <person name="Sucgang R."/>
            <person name="Berriman M."/>
            <person name="Song J."/>
            <person name="Olsen R."/>
            <person name="Szafranski K."/>
            <person name="Xu Q."/>
            <person name="Tunggal B."/>
            <person name="Kummerfeld S."/>
            <person name="Madera M."/>
            <person name="Konfortov B.A."/>
            <person name="Rivero F."/>
            <person name="Bankier A.T."/>
            <person name="Lehmann R."/>
            <person name="Hamlin N."/>
            <person name="Davies R."/>
            <person name="Gaudet P."/>
            <person name="Fey P."/>
            <person name="Pilcher K."/>
            <person name="Chen G."/>
            <person name="Saunders D."/>
            <person name="Sodergren E.J."/>
            <person name="Davis P."/>
            <person name="Kerhornou A."/>
            <person name="Nie X."/>
            <person name="Hall N."/>
            <person name="Anjard C."/>
            <person name="Hemphill L."/>
            <person name="Bason N."/>
            <person name="Farbrother P."/>
            <person name="Desany B."/>
            <person name="Just E."/>
            <person name="Morio T."/>
            <person name="Rost R."/>
            <person name="Churcher C.M."/>
            <person name="Cooper J."/>
            <person name="Haydock S."/>
            <person name="van Driessche N."/>
            <person name="Cronin A."/>
            <person name="Goodhead I."/>
            <person name="Muzny D.M."/>
            <person name="Mourier T."/>
            <person name="Pain A."/>
            <person name="Lu M."/>
            <person name="Harper D."/>
            <person name="Lindsay R."/>
            <person name="Hauser H."/>
            <person name="James K.D."/>
            <person name="Quiles M."/>
            <person name="Madan Babu M."/>
            <person name="Saito T."/>
            <person name="Buchrieser C."/>
            <person name="Wardroper A."/>
            <person name="Felder M."/>
            <person name="Thangavelu M."/>
            <person name="Johnson D."/>
            <person name="Knights A."/>
            <person name="Loulseged H."/>
            <person name="Mungall K.L."/>
            <person name="Oliver K."/>
            <person name="Price C."/>
            <person name="Quail M.A."/>
            <person name="Urushihara H."/>
            <person name="Hernandez J."/>
            <person name="Rabbinowitsch E."/>
            <person name="Steffen D."/>
            <person name="Sanders M."/>
            <person name="Ma J."/>
            <person name="Kohara Y."/>
            <person name="Sharp S."/>
            <person name="Simmonds M.N."/>
            <person name="Spiegler S."/>
            <person name="Tivey A."/>
            <person name="Sugano S."/>
            <person name="White B."/>
            <person name="Walker D."/>
            <person name="Woodward J.R."/>
            <person name="Winckler T."/>
            <person name="Tanaka Y."/>
            <person name="Shaulsky G."/>
            <person name="Schleicher M."/>
            <person name="Weinstock G.M."/>
            <person name="Rosenthal A."/>
            <person name="Cox E.C."/>
            <person name="Chisholm R.L."/>
            <person name="Gibbs R.A."/>
            <person name="Loomis W.F."/>
            <person name="Platzer M."/>
            <person name="Kay R.R."/>
            <person name="Williams J.G."/>
            <person name="Dear P.H."/>
            <person name="Noegel A.A."/>
            <person name="Barrell B.G."/>
            <person name="Kuspa A."/>
        </authorList>
    </citation>
    <scope>NUCLEOTIDE SEQUENCE [LARGE SCALE GENOMIC DNA]</scope>
    <source>
        <strain>AX4</strain>
    </source>
</reference>
<reference key="2">
    <citation type="journal article" date="2003" name="FEBS Lett.">
        <title>Expression of a family of expansin-like proteins during the development of Dictyostelium discoideum.</title>
        <authorList>
            <person name="Darley C.P."/>
            <person name="Li Y."/>
            <person name="Schaap P."/>
            <person name="McQueen-Mason S.J."/>
        </authorList>
    </citation>
    <scope>DEVELOPMENTAL STAGE</scope>
    <scope>FUNCTION</scope>
</reference>
<reference key="3">
    <citation type="journal article" date="2002" name="Plant Physiol.">
        <title>Plant expansins are a complex multigene family with an ancient evolutionary origin.</title>
        <authorList>
            <person name="Li Y."/>
            <person name="Darley C.P."/>
            <person name="Ongaro V."/>
            <person name="Fleming A."/>
            <person name="Schipper O."/>
            <person name="Baldauf S.L."/>
            <person name="McQueen-Mason S.J."/>
        </authorList>
    </citation>
    <scope>FUNCTION</scope>
</reference>
<comment type="function">
    <text evidence="3 4">May serve to lubricate the movement of the cellulose microfibrils during cell growth and wall extension and/or may serve to maintain the fluid state of the slug cell wall.</text>
</comment>
<comment type="subcellular location">
    <subcellularLocation>
        <location evidence="5">Membrane</location>
        <topology evidence="5">Single-pass type I membrane protein</topology>
    </subcellularLocation>
</comment>
<comment type="developmental stage">
    <text evidence="4">No detectable expression.</text>
</comment>
<comment type="similarity">
    <text evidence="5">Belongs to the expansin family. Expansin A subfamily.</text>
</comment>
<organism>
    <name type="scientific">Dictyostelium discoideum</name>
    <name type="common">Social amoeba</name>
    <dbReference type="NCBI Taxonomy" id="44689"/>
    <lineage>
        <taxon>Eukaryota</taxon>
        <taxon>Amoebozoa</taxon>
        <taxon>Evosea</taxon>
        <taxon>Eumycetozoa</taxon>
        <taxon>Dictyostelia</taxon>
        <taxon>Dictyosteliales</taxon>
        <taxon>Dictyosteliaceae</taxon>
        <taxon>Dictyostelium</taxon>
    </lineage>
</organism>
<dbReference type="EMBL" id="AAFI02000003">
    <property type="protein sequence ID" value="EAL73375.1"/>
    <property type="molecule type" value="Genomic_DNA"/>
</dbReference>
<dbReference type="RefSeq" id="XP_647351.1">
    <property type="nucleotide sequence ID" value="XM_642259.1"/>
</dbReference>
<dbReference type="SMR" id="Q55G32"/>
<dbReference type="STRING" id="44689.Q55G32"/>
<dbReference type="GlyCosmos" id="Q55G32">
    <property type="glycosylation" value="1 site, No reported glycans"/>
</dbReference>
<dbReference type="GlyGen" id="Q55G32">
    <property type="glycosylation" value="1 site"/>
</dbReference>
<dbReference type="PaxDb" id="44689-DDB0231628"/>
<dbReference type="EnsemblProtists" id="EAL73375">
    <property type="protein sequence ID" value="EAL73375"/>
    <property type="gene ID" value="DDB_G0267844"/>
</dbReference>
<dbReference type="GeneID" id="8616162"/>
<dbReference type="KEGG" id="ddi:DDB_G0267844"/>
<dbReference type="dictyBase" id="DDB_G0267844">
    <property type="gene designation" value="expl6"/>
</dbReference>
<dbReference type="VEuPathDB" id="AmoebaDB:DDB_G0267844"/>
<dbReference type="HOGENOM" id="CLU_071727_0_0_1"/>
<dbReference type="InParanoid" id="Q55G32"/>
<dbReference type="OMA" id="RFCIRGT"/>
<dbReference type="PhylomeDB" id="Q55G32"/>
<dbReference type="PRO" id="PR:Q55G32"/>
<dbReference type="Proteomes" id="UP000002195">
    <property type="component" value="Chromosome 1"/>
</dbReference>
<dbReference type="GO" id="GO:0016020">
    <property type="term" value="C:membrane"/>
    <property type="evidence" value="ECO:0007669"/>
    <property type="project" value="UniProtKB-SubCell"/>
</dbReference>
<dbReference type="CDD" id="cd22271">
    <property type="entry name" value="DPBB_EXP_N-like"/>
    <property type="match status" value="1"/>
</dbReference>
<dbReference type="Gene3D" id="2.60.40.760">
    <property type="entry name" value="Expansin, cellulose-binding-like domain"/>
    <property type="match status" value="1"/>
</dbReference>
<dbReference type="Gene3D" id="2.40.40.10">
    <property type="entry name" value="RlpA-like domain"/>
    <property type="match status" value="1"/>
</dbReference>
<dbReference type="InterPro" id="IPR007112">
    <property type="entry name" value="Expansin/allergen_DPBB_dom"/>
</dbReference>
<dbReference type="InterPro" id="IPR036749">
    <property type="entry name" value="Expansin_CBD_sf"/>
</dbReference>
<dbReference type="InterPro" id="IPR051477">
    <property type="entry name" value="Expansin_CellWall"/>
</dbReference>
<dbReference type="InterPro" id="IPR036908">
    <property type="entry name" value="RlpA-like_sf"/>
</dbReference>
<dbReference type="PANTHER" id="PTHR31836">
    <property type="match status" value="1"/>
</dbReference>
<dbReference type="PANTHER" id="PTHR31836:SF2">
    <property type="entry name" value="EXPANSIN-LIKE PROTEIN 3-RELATED"/>
    <property type="match status" value="1"/>
</dbReference>
<dbReference type="SUPFAM" id="SSF50685">
    <property type="entry name" value="Barwin-like endoglucanases"/>
    <property type="match status" value="1"/>
</dbReference>
<dbReference type="SUPFAM" id="SSF49590">
    <property type="entry name" value="PHL pollen allergen"/>
    <property type="match status" value="1"/>
</dbReference>
<dbReference type="PROSITE" id="PS50842">
    <property type="entry name" value="EXPANSIN_EG45"/>
    <property type="match status" value="1"/>
</dbReference>
<evidence type="ECO:0000255" key="1"/>
<evidence type="ECO:0000255" key="2">
    <source>
        <dbReference type="PROSITE-ProRule" id="PRU00079"/>
    </source>
</evidence>
<evidence type="ECO:0000269" key="3">
    <source>
    </source>
</evidence>
<evidence type="ECO:0000269" key="4">
    <source>
    </source>
</evidence>
<evidence type="ECO:0000305" key="5"/>
<proteinExistence type="evidence at transcript level"/>
<gene>
    <name type="primary">expl6</name>
    <name type="ORF">DDB_G0267844</name>
</gene>
<feature type="signal peptide" evidence="1">
    <location>
        <begin position="1"/>
        <end position="24"/>
    </location>
</feature>
<feature type="chain" id="PRO_0000368219" description="Expansin-like protein 6">
    <location>
        <begin position="25"/>
        <end position="292"/>
    </location>
</feature>
<feature type="topological domain" description="Extracellular" evidence="1">
    <location>
        <begin position="25"/>
        <end position="267"/>
    </location>
</feature>
<feature type="transmembrane region" description="Helical" evidence="1">
    <location>
        <begin position="268"/>
        <end position="288"/>
    </location>
</feature>
<feature type="topological domain" description="Cytoplasmic" evidence="1">
    <location>
        <begin position="289"/>
        <end position="292"/>
    </location>
</feature>
<feature type="domain" description="Expansin-like EG45" evidence="2">
    <location>
        <begin position="47"/>
        <end position="150"/>
    </location>
</feature>
<feature type="glycosylation site" description="N-linked (GlcNAc...) asparagine" evidence="1">
    <location>
        <position position="92"/>
    </location>
</feature>
<feature type="disulfide bond" evidence="2">
    <location>
        <begin position="50"/>
        <end position="80"/>
    </location>
</feature>
<feature type="disulfide bond" evidence="2">
    <location>
        <begin position="83"/>
        <end position="145"/>
    </location>
</feature>
<sequence>MIKIIYLIVLLVLLFKNNHIIIKADDCPFPQIPIKTLSGTWYDDPDHASCGFEKLTGPLGPGNRLVVALGSKLFDKGANCGQCYDVTSPFNNKTITVMATDSCHDAGYCQADNHFDFYKEAFDLLGSPSGVISGNSGLSYIKVPCPTYGNVKIMMKDGSNEFWTSFLIFNSRILIKQVSIKLSNSQQFIDLNRQPQGNYWPSTNMVSGEFEVRIESIGGEFIYVKIPSIESRKIYDTGNQFSADGCVGNKYDPYAPFQITSNSNNILPPSLYIIFLISILFLIINNIFSNKY</sequence>
<name>EXPL6_DICDI</name>
<accession>Q55G32</accession>
<protein>
    <recommendedName>
        <fullName>Expansin-like protein 6</fullName>
        <shortName>Ddexpl6</shortName>
    </recommendedName>
</protein>